<proteinExistence type="inferred from homology"/>
<organism>
    <name type="scientific">Picrophilus torridus (strain ATCC 700027 / DSM 9790 / JCM 10055 / NBRC 100828 / KAW 2/3)</name>
    <dbReference type="NCBI Taxonomy" id="1122961"/>
    <lineage>
        <taxon>Archaea</taxon>
        <taxon>Methanobacteriati</taxon>
        <taxon>Thermoplasmatota</taxon>
        <taxon>Thermoplasmata</taxon>
        <taxon>Thermoplasmatales</taxon>
        <taxon>Picrophilaceae</taxon>
        <taxon>Picrophilus</taxon>
    </lineage>
</organism>
<evidence type="ECO:0000255" key="1">
    <source>
        <dbReference type="HAMAP-Rule" id="MF_00317"/>
    </source>
</evidence>
<dbReference type="EMBL" id="AE017261">
    <property type="protein sequence ID" value="AAT43901.1"/>
    <property type="molecule type" value="Genomic_DNA"/>
</dbReference>
<dbReference type="RefSeq" id="WP_011178117.1">
    <property type="nucleotide sequence ID" value="NC_005877.1"/>
</dbReference>
<dbReference type="SMR" id="Q6KZF1"/>
<dbReference type="FunCoup" id="Q6KZF1">
    <property type="interactions" value="148"/>
</dbReference>
<dbReference type="STRING" id="263820.PTO1316"/>
<dbReference type="PaxDb" id="263820-PTO1316"/>
<dbReference type="GeneID" id="2845323"/>
<dbReference type="KEGG" id="pto:PTO1316"/>
<dbReference type="eggNOG" id="arCOG00488">
    <property type="taxonomic scope" value="Archaea"/>
</dbReference>
<dbReference type="HOGENOM" id="CLU_043978_1_1_2"/>
<dbReference type="InParanoid" id="Q6KZF1"/>
<dbReference type="OrthoDB" id="14749at2157"/>
<dbReference type="Proteomes" id="UP000000438">
    <property type="component" value="Chromosome"/>
</dbReference>
<dbReference type="GO" id="GO:0003677">
    <property type="term" value="F:DNA binding"/>
    <property type="evidence" value="ECO:0007669"/>
    <property type="project" value="UniProtKB-UniRule"/>
</dbReference>
<dbReference type="GO" id="GO:0030337">
    <property type="term" value="F:DNA polymerase processivity factor activity"/>
    <property type="evidence" value="ECO:0007669"/>
    <property type="project" value="UniProtKB-UniRule"/>
</dbReference>
<dbReference type="GO" id="GO:0006272">
    <property type="term" value="P:leading strand elongation"/>
    <property type="evidence" value="ECO:0007669"/>
    <property type="project" value="TreeGrafter"/>
</dbReference>
<dbReference type="GO" id="GO:0006275">
    <property type="term" value="P:regulation of DNA replication"/>
    <property type="evidence" value="ECO:0007669"/>
    <property type="project" value="UniProtKB-UniRule"/>
</dbReference>
<dbReference type="CDD" id="cd00577">
    <property type="entry name" value="PCNA"/>
    <property type="match status" value="1"/>
</dbReference>
<dbReference type="Gene3D" id="3.70.10.10">
    <property type="match status" value="1"/>
</dbReference>
<dbReference type="HAMAP" id="MF_00317">
    <property type="entry name" value="DNApol_clamp_arch"/>
    <property type="match status" value="1"/>
</dbReference>
<dbReference type="InterPro" id="IPR046938">
    <property type="entry name" value="DNA_clamp_sf"/>
</dbReference>
<dbReference type="InterPro" id="IPR000730">
    <property type="entry name" value="Pr_cel_nuc_antig"/>
</dbReference>
<dbReference type="InterPro" id="IPR022649">
    <property type="entry name" value="Pr_cel_nuc_antig_C"/>
</dbReference>
<dbReference type="InterPro" id="IPR022659">
    <property type="entry name" value="Pr_cel_nuc_antig_CS"/>
</dbReference>
<dbReference type="InterPro" id="IPR022648">
    <property type="entry name" value="Pr_cel_nuc_antig_N"/>
</dbReference>
<dbReference type="NCBIfam" id="NF002222">
    <property type="entry name" value="PRK01115.1-5"/>
    <property type="match status" value="1"/>
</dbReference>
<dbReference type="PANTHER" id="PTHR11352">
    <property type="entry name" value="PROLIFERATING CELL NUCLEAR ANTIGEN"/>
    <property type="match status" value="1"/>
</dbReference>
<dbReference type="PANTHER" id="PTHR11352:SF0">
    <property type="entry name" value="PROLIFERATING CELL NUCLEAR ANTIGEN"/>
    <property type="match status" value="1"/>
</dbReference>
<dbReference type="Pfam" id="PF02747">
    <property type="entry name" value="PCNA_C"/>
    <property type="match status" value="1"/>
</dbReference>
<dbReference type="Pfam" id="PF00705">
    <property type="entry name" value="PCNA_N"/>
    <property type="match status" value="1"/>
</dbReference>
<dbReference type="PRINTS" id="PR00339">
    <property type="entry name" value="PCNACYCLIN"/>
</dbReference>
<dbReference type="SUPFAM" id="SSF55979">
    <property type="entry name" value="DNA clamp"/>
    <property type="match status" value="2"/>
</dbReference>
<dbReference type="PROSITE" id="PS01251">
    <property type="entry name" value="PCNA_1"/>
    <property type="match status" value="1"/>
</dbReference>
<feature type="chain" id="PRO_0000149202" description="DNA polymerase sliding clamp">
    <location>
        <begin position="1"/>
        <end position="245"/>
    </location>
</feature>
<comment type="function">
    <text evidence="1">Sliding clamp subunit that acts as a moving platform for DNA processing. Responsible for tethering the catalytic subunit of DNA polymerase and other proteins to DNA during high-speed replication.</text>
</comment>
<comment type="subunit">
    <text evidence="1">Homotrimer. The subunits circularize to form a toroid; DNA passes through its center. Replication factor C (RFC) is required to load the toroid on the DNA.</text>
</comment>
<comment type="similarity">
    <text evidence="1">Belongs to the PCNA family.</text>
</comment>
<gene>
    <name evidence="1" type="primary">pcn</name>
    <name type="ordered locus">PTO1316</name>
</gene>
<reference key="1">
    <citation type="journal article" date="2004" name="Proc. Natl. Acad. Sci. U.S.A.">
        <title>Genome sequence of Picrophilus torridus and its implications for life around pH 0.</title>
        <authorList>
            <person name="Fuetterer O."/>
            <person name="Angelov A."/>
            <person name="Liesegang H."/>
            <person name="Gottschalk G."/>
            <person name="Schleper C."/>
            <person name="Schepers B."/>
            <person name="Dock C."/>
            <person name="Antranikian G."/>
            <person name="Liebl W."/>
        </authorList>
    </citation>
    <scope>NUCLEOTIDE SEQUENCE [LARGE SCALE GENOMIC DNA]</scope>
    <source>
        <strain>ATCC 700027 / DSM 9790 / JCM 10055 / NBRC 100828 / KAW 2/3</strain>
    </source>
</reference>
<sequence length="245" mass="27086">MTRMSISVKNLKEIVDMLGTIVSEVKFKLEPNGISVTAVDPAHVAMISLDIPKNAFSEYDLDAPDEIAVDLDKVKSVIRLASSNDTIVISKDRDKLRFEIGTIIKSIALLDNNSVTTPRVPQINSDDYVILSKSDLEKGLRAAEDVSDAIRLTLTPESFSAKSTSDSDESEMLLPKDMLKDISCSQPIKSSYPLEYLLKLVKSISSNEDIKISFKSDYPLSIEFSFNSETEPISGKFLLAPRMES</sequence>
<protein>
    <recommendedName>
        <fullName evidence="1">DNA polymerase sliding clamp</fullName>
    </recommendedName>
    <alternativeName>
        <fullName evidence="1">Proliferating cell nuclear antigen homolog</fullName>
        <shortName evidence="1">PCNA</shortName>
    </alternativeName>
</protein>
<accession>Q6KZF1</accession>
<name>PCNA_PICTO</name>
<keyword id="KW-0235">DNA replication</keyword>
<keyword id="KW-0238">DNA-binding</keyword>